<proteinExistence type="inferred from homology"/>
<dbReference type="EMBL" id="AP006716">
    <property type="protein sequence ID" value="BAE05291.1"/>
    <property type="molecule type" value="Genomic_DNA"/>
</dbReference>
<dbReference type="RefSeq" id="WP_011276249.1">
    <property type="nucleotide sequence ID" value="NC_007168.1"/>
</dbReference>
<dbReference type="SMR" id="Q4L4Y4"/>
<dbReference type="KEGG" id="sha:SH1982"/>
<dbReference type="eggNOG" id="COG0179">
    <property type="taxonomic scope" value="Bacteria"/>
</dbReference>
<dbReference type="HOGENOM" id="CLU_028458_3_3_9"/>
<dbReference type="OrthoDB" id="9805307at2"/>
<dbReference type="Proteomes" id="UP000000543">
    <property type="component" value="Chromosome"/>
</dbReference>
<dbReference type="GO" id="GO:0018773">
    <property type="term" value="F:acetylpyruvate hydrolase activity"/>
    <property type="evidence" value="ECO:0007669"/>
    <property type="project" value="TreeGrafter"/>
</dbReference>
<dbReference type="GO" id="GO:0046872">
    <property type="term" value="F:metal ion binding"/>
    <property type="evidence" value="ECO:0007669"/>
    <property type="project" value="UniProtKB-KW"/>
</dbReference>
<dbReference type="FunFam" id="3.90.850.10:FF:000010">
    <property type="entry name" value="FAA hydrolase family protein"/>
    <property type="match status" value="1"/>
</dbReference>
<dbReference type="Gene3D" id="3.90.850.10">
    <property type="entry name" value="Fumarylacetoacetase-like, C-terminal domain"/>
    <property type="match status" value="1"/>
</dbReference>
<dbReference type="InterPro" id="IPR011234">
    <property type="entry name" value="Fumarylacetoacetase-like_C"/>
</dbReference>
<dbReference type="InterPro" id="IPR036663">
    <property type="entry name" value="Fumarylacetoacetase_C_sf"/>
</dbReference>
<dbReference type="PANTHER" id="PTHR11820">
    <property type="entry name" value="ACYLPYRUVASE"/>
    <property type="match status" value="1"/>
</dbReference>
<dbReference type="PANTHER" id="PTHR11820:SF7">
    <property type="entry name" value="ACYLPYRUVASE FAHD1, MITOCHONDRIAL"/>
    <property type="match status" value="1"/>
</dbReference>
<dbReference type="Pfam" id="PF01557">
    <property type="entry name" value="FAA_hydrolase"/>
    <property type="match status" value="1"/>
</dbReference>
<dbReference type="SUPFAM" id="SSF56529">
    <property type="entry name" value="FAH"/>
    <property type="match status" value="1"/>
</dbReference>
<reference key="1">
    <citation type="journal article" date="2005" name="J. Bacteriol.">
        <title>Whole-genome sequencing of Staphylococcus haemolyticus uncovers the extreme plasticity of its genome and the evolution of human-colonizing staphylococcal species.</title>
        <authorList>
            <person name="Takeuchi F."/>
            <person name="Watanabe S."/>
            <person name="Baba T."/>
            <person name="Yuzawa H."/>
            <person name="Ito T."/>
            <person name="Morimoto Y."/>
            <person name="Kuroda M."/>
            <person name="Cui L."/>
            <person name="Takahashi M."/>
            <person name="Ankai A."/>
            <person name="Baba S."/>
            <person name="Fukui S."/>
            <person name="Lee J.C."/>
            <person name="Hiramatsu K."/>
        </authorList>
    </citation>
    <scope>NUCLEOTIDE SEQUENCE [LARGE SCALE GENOMIC DNA]</scope>
    <source>
        <strain>JCSC1435</strain>
    </source>
</reference>
<evidence type="ECO:0000250" key="1"/>
<evidence type="ECO:0000305" key="2"/>
<protein>
    <recommendedName>
        <fullName>Uncharacterized protein SH1982</fullName>
    </recommendedName>
</protein>
<keyword id="KW-0479">Metal-binding</keyword>
<comment type="similarity">
    <text evidence="2">Belongs to the FAH family.</text>
</comment>
<sequence length="301" mass="33286">MKFLSFNYKDAESYGVKVKRKDAVWDLKKVFAEFGEGDFHPQTLLEGLQQNQTLDFQEQVRKAVVAAEDSGKADEFKIAFNDIEFLPPVTPPNNVIAFGRNYQDHASELNHEVQRLYVFTKAASSLTGDESTIPNHKDITDQLDYEGELGIVIGKSGEKIPKALALDYIYGYTIINDITDRKAQNEQDQAFLSKSLTGGCPMGPYIVTKDELPTPENVNIVTKVNNDIRQDGNTSQMINKIDDLIEEISKYVALHPGDIIATGTPAGVGAGLQPPQFLQPGDEVKVTIDNIGTLTTYIAKD</sequence>
<feature type="chain" id="PRO_0000303228" description="Uncharacterized protein SH1982">
    <location>
        <begin position="1"/>
        <end position="301"/>
    </location>
</feature>
<feature type="binding site" evidence="1">
    <location>
        <position position="146"/>
    </location>
    <ligand>
        <name>a divalent metal cation</name>
        <dbReference type="ChEBI" id="CHEBI:60240"/>
    </ligand>
</feature>
<feature type="binding site" evidence="1">
    <location>
        <position position="148"/>
    </location>
    <ligand>
        <name>a divalent metal cation</name>
        <dbReference type="ChEBI" id="CHEBI:60240"/>
    </ligand>
</feature>
<feature type="binding site" evidence="1">
    <location>
        <position position="177"/>
    </location>
    <ligand>
        <name>a divalent metal cation</name>
        <dbReference type="ChEBI" id="CHEBI:60240"/>
    </ligand>
</feature>
<accession>Q4L4Y4</accession>
<gene>
    <name type="ordered locus">SH1982</name>
</gene>
<organism>
    <name type="scientific">Staphylococcus haemolyticus (strain JCSC1435)</name>
    <dbReference type="NCBI Taxonomy" id="279808"/>
    <lineage>
        <taxon>Bacteria</taxon>
        <taxon>Bacillati</taxon>
        <taxon>Bacillota</taxon>
        <taxon>Bacilli</taxon>
        <taxon>Bacillales</taxon>
        <taxon>Staphylococcaceae</taxon>
        <taxon>Staphylococcus</taxon>
    </lineage>
</organism>
<name>Y1982_STAHJ</name>